<dbReference type="EMBL" id="AY358271">
    <property type="protein sequence ID" value="AAQ88638.1"/>
    <property type="molecule type" value="mRNA"/>
</dbReference>
<dbReference type="EMBL" id="BC101780">
    <property type="protein sequence ID" value="AAI01781.1"/>
    <property type="molecule type" value="mRNA"/>
</dbReference>
<dbReference type="EMBL" id="BC105101">
    <property type="protein sequence ID" value="AAI05102.1"/>
    <property type="molecule type" value="mRNA"/>
</dbReference>
<dbReference type="EMBL" id="BC143652">
    <property type="protein sequence ID" value="AAI43653.1"/>
    <property type="molecule type" value="mRNA"/>
</dbReference>
<dbReference type="CCDS" id="CCDS34446.1"/>
<dbReference type="RefSeq" id="NP_937796.1">
    <property type="nucleotide sequence ID" value="NM_198153.3"/>
</dbReference>
<dbReference type="SMR" id="Q6UXN2"/>
<dbReference type="FunCoup" id="Q6UXN2">
    <property type="interactions" value="293"/>
</dbReference>
<dbReference type="STRING" id="9606.ENSP00000342570"/>
<dbReference type="GlyCosmos" id="Q6UXN2">
    <property type="glycosylation" value="1 site, No reported glycans"/>
</dbReference>
<dbReference type="GlyGen" id="Q6UXN2">
    <property type="glycosylation" value="1 site"/>
</dbReference>
<dbReference type="PhosphoSitePlus" id="Q6UXN2"/>
<dbReference type="BioMuta" id="TREML4"/>
<dbReference type="DMDM" id="74762374"/>
<dbReference type="MassIVE" id="Q6UXN2"/>
<dbReference type="PaxDb" id="9606-ENSP00000342570"/>
<dbReference type="Antibodypedia" id="70761">
    <property type="antibodies" value="41 antibodies from 14 providers"/>
</dbReference>
<dbReference type="DNASU" id="285852"/>
<dbReference type="Ensembl" id="ENST00000341495.7">
    <property type="protein sequence ID" value="ENSP00000342570.2"/>
    <property type="gene ID" value="ENSG00000188056.12"/>
</dbReference>
<dbReference type="Ensembl" id="ENST00000448827.6">
    <property type="protein sequence ID" value="ENSP00000418078.1"/>
    <property type="gene ID" value="ENSG00000188056.12"/>
</dbReference>
<dbReference type="GeneID" id="285852"/>
<dbReference type="KEGG" id="hsa:285852"/>
<dbReference type="MANE-Select" id="ENST00000341495.7">
    <property type="protein sequence ID" value="ENSP00000342570.2"/>
    <property type="RefSeq nucleotide sequence ID" value="NM_198153.3"/>
    <property type="RefSeq protein sequence ID" value="NP_937796.1"/>
</dbReference>
<dbReference type="UCSC" id="uc003oqc.3">
    <property type="organism name" value="human"/>
</dbReference>
<dbReference type="AGR" id="HGNC:30807"/>
<dbReference type="CTD" id="285852"/>
<dbReference type="DisGeNET" id="285852"/>
<dbReference type="GeneCards" id="TREML4"/>
<dbReference type="HGNC" id="HGNC:30807">
    <property type="gene designation" value="TREML4"/>
</dbReference>
<dbReference type="HPA" id="ENSG00000188056">
    <property type="expression patterns" value="Tissue enhanced (choroid)"/>
</dbReference>
<dbReference type="MIM" id="614664">
    <property type="type" value="gene"/>
</dbReference>
<dbReference type="neXtProt" id="NX_Q6UXN2"/>
<dbReference type="OpenTargets" id="ENSG00000188056"/>
<dbReference type="PharmGKB" id="PA134993202"/>
<dbReference type="VEuPathDB" id="HostDB:ENSG00000188056"/>
<dbReference type="eggNOG" id="ENOG502TG0M">
    <property type="taxonomic scope" value="Eukaryota"/>
</dbReference>
<dbReference type="GeneTree" id="ENSGT00940000153835"/>
<dbReference type="HOGENOM" id="CLU_051023_2_1_1"/>
<dbReference type="InParanoid" id="Q6UXN2"/>
<dbReference type="OMA" id="PYQSKTW"/>
<dbReference type="OrthoDB" id="9805957at2759"/>
<dbReference type="PAN-GO" id="Q6UXN2">
    <property type="GO annotations" value="3 GO annotations based on evolutionary models"/>
</dbReference>
<dbReference type="PhylomeDB" id="Q6UXN2"/>
<dbReference type="TreeFam" id="TF337556"/>
<dbReference type="PathwayCommons" id="Q6UXN2"/>
<dbReference type="Reactome" id="R-HSA-198933">
    <property type="pathway name" value="Immunoregulatory interactions between a Lymphoid and a non-Lymphoid cell"/>
</dbReference>
<dbReference type="BioGRID-ORCS" id="285852">
    <property type="hits" value="8 hits in 1135 CRISPR screens"/>
</dbReference>
<dbReference type="GenomeRNAi" id="285852"/>
<dbReference type="Pharos" id="Q6UXN2">
    <property type="development level" value="Tbio"/>
</dbReference>
<dbReference type="PRO" id="PR:Q6UXN2"/>
<dbReference type="Proteomes" id="UP000005640">
    <property type="component" value="Chromosome 6"/>
</dbReference>
<dbReference type="RNAct" id="Q6UXN2">
    <property type="molecule type" value="protein"/>
</dbReference>
<dbReference type="Bgee" id="ENSG00000188056">
    <property type="expression patterns" value="Expressed in buccal mucosa cell and 59 other cell types or tissues"/>
</dbReference>
<dbReference type="ExpressionAtlas" id="Q6UXN2">
    <property type="expression patterns" value="baseline and differential"/>
</dbReference>
<dbReference type="GO" id="GO:0009986">
    <property type="term" value="C:cell surface"/>
    <property type="evidence" value="ECO:0000318"/>
    <property type="project" value="GO_Central"/>
</dbReference>
<dbReference type="GO" id="GO:0005576">
    <property type="term" value="C:extracellular region"/>
    <property type="evidence" value="ECO:0007669"/>
    <property type="project" value="UniProtKB-SubCell"/>
</dbReference>
<dbReference type="GO" id="GO:0005886">
    <property type="term" value="C:plasma membrane"/>
    <property type="evidence" value="ECO:0000304"/>
    <property type="project" value="Reactome"/>
</dbReference>
<dbReference type="GO" id="GO:0038023">
    <property type="term" value="F:signaling receptor activity"/>
    <property type="evidence" value="ECO:0000318"/>
    <property type="project" value="GO_Central"/>
</dbReference>
<dbReference type="GO" id="GO:0045087">
    <property type="term" value="P:innate immune response"/>
    <property type="evidence" value="ECO:0007669"/>
    <property type="project" value="UniProtKB-KW"/>
</dbReference>
<dbReference type="GO" id="GO:0034157">
    <property type="term" value="P:positive regulation of toll-like receptor 7 signaling pathway"/>
    <property type="evidence" value="ECO:0000315"/>
    <property type="project" value="UniProtKB"/>
</dbReference>
<dbReference type="CDD" id="cd05716">
    <property type="entry name" value="IgV_pIgR_like"/>
    <property type="match status" value="1"/>
</dbReference>
<dbReference type="FunFam" id="2.60.40.10:FF:000370">
    <property type="entry name" value="CMRF35-like molecule 1"/>
    <property type="match status" value="1"/>
</dbReference>
<dbReference type="Gene3D" id="2.60.40.10">
    <property type="entry name" value="Immunoglobulins"/>
    <property type="match status" value="1"/>
</dbReference>
<dbReference type="InterPro" id="IPR007110">
    <property type="entry name" value="Ig-like_dom"/>
</dbReference>
<dbReference type="InterPro" id="IPR036179">
    <property type="entry name" value="Ig-like_dom_sf"/>
</dbReference>
<dbReference type="InterPro" id="IPR013783">
    <property type="entry name" value="Ig-like_fold"/>
</dbReference>
<dbReference type="InterPro" id="IPR003599">
    <property type="entry name" value="Ig_sub"/>
</dbReference>
<dbReference type="InterPro" id="IPR013106">
    <property type="entry name" value="Ig_V-set"/>
</dbReference>
<dbReference type="InterPro" id="IPR052314">
    <property type="entry name" value="Immune_rcpt_domain"/>
</dbReference>
<dbReference type="PANTHER" id="PTHR16423:SF9">
    <property type="entry name" value="TREM-LIKE TRANSCRIPT 4 PROTEIN"/>
    <property type="match status" value="1"/>
</dbReference>
<dbReference type="PANTHER" id="PTHR16423">
    <property type="entry name" value="TREM-LIKE TRANSCRIPT PROTEIN"/>
    <property type="match status" value="1"/>
</dbReference>
<dbReference type="Pfam" id="PF07686">
    <property type="entry name" value="V-set"/>
    <property type="match status" value="1"/>
</dbReference>
<dbReference type="SMART" id="SM00409">
    <property type="entry name" value="IG"/>
    <property type="match status" value="1"/>
</dbReference>
<dbReference type="SUPFAM" id="SSF48726">
    <property type="entry name" value="Immunoglobulin"/>
    <property type="match status" value="1"/>
</dbReference>
<dbReference type="PROSITE" id="PS50835">
    <property type="entry name" value="IG_LIKE"/>
    <property type="match status" value="1"/>
</dbReference>
<name>TRML4_HUMAN</name>
<organism>
    <name type="scientific">Homo sapiens</name>
    <name type="common">Human</name>
    <dbReference type="NCBI Taxonomy" id="9606"/>
    <lineage>
        <taxon>Eukaryota</taxon>
        <taxon>Metazoa</taxon>
        <taxon>Chordata</taxon>
        <taxon>Craniata</taxon>
        <taxon>Vertebrata</taxon>
        <taxon>Euteleostomi</taxon>
        <taxon>Mammalia</taxon>
        <taxon>Eutheria</taxon>
        <taxon>Euarchontoglires</taxon>
        <taxon>Primates</taxon>
        <taxon>Haplorrhini</taxon>
        <taxon>Catarrhini</taxon>
        <taxon>Hominidae</taxon>
        <taxon>Homo</taxon>
    </lineage>
</organism>
<feature type="signal peptide" evidence="1">
    <location>
        <begin position="1"/>
        <end position="25"/>
    </location>
</feature>
<feature type="chain" id="PRO_0000307276" description="Trem-like transcript 4 protein">
    <location>
        <begin position="26"/>
        <end position="200"/>
    </location>
</feature>
<feature type="domain" description="Ig-like V-type">
    <location>
        <begin position="26"/>
        <end position="126"/>
    </location>
</feature>
<feature type="glycosylation site" description="N-linked (GlcNAc...) asparagine" evidence="1">
    <location>
        <position position="93"/>
    </location>
</feature>
<feature type="disulfide bond" evidence="2">
    <location>
        <begin position="40"/>
        <end position="109"/>
    </location>
</feature>
<feature type="sequence variant" id="VAR_035390" description="In dbSNP:rs9369265.">
    <original>W</original>
    <variation>R</variation>
    <location>
        <position position="73"/>
    </location>
</feature>
<feature type="sequence variant" id="VAR_035391" description="In dbSNP:rs9471515.">
    <original>T</original>
    <variation>K</variation>
    <location>
        <position position="146"/>
    </location>
</feature>
<feature type="sequence variant" id="VAR_035392" description="In dbSNP:rs7769759.">
    <original>T</original>
    <variation>I</variation>
    <location>
        <position position="168"/>
    </location>
</feature>
<reference key="1">
    <citation type="journal article" date="2003" name="Genome Res.">
        <title>The secreted protein discovery initiative (SPDI), a large-scale effort to identify novel human secreted and transmembrane proteins: a bioinformatics assessment.</title>
        <authorList>
            <person name="Clark H.F."/>
            <person name="Gurney A.L."/>
            <person name="Abaya E."/>
            <person name="Baker K."/>
            <person name="Baldwin D.T."/>
            <person name="Brush J."/>
            <person name="Chen J."/>
            <person name="Chow B."/>
            <person name="Chui C."/>
            <person name="Crowley C."/>
            <person name="Currell B."/>
            <person name="Deuel B."/>
            <person name="Dowd P."/>
            <person name="Eaton D."/>
            <person name="Foster J.S."/>
            <person name="Grimaldi C."/>
            <person name="Gu Q."/>
            <person name="Hass P.E."/>
            <person name="Heldens S."/>
            <person name="Huang A."/>
            <person name="Kim H.S."/>
            <person name="Klimowski L."/>
            <person name="Jin Y."/>
            <person name="Johnson S."/>
            <person name="Lee J."/>
            <person name="Lewis L."/>
            <person name="Liao D."/>
            <person name="Mark M.R."/>
            <person name="Robbie E."/>
            <person name="Sanchez C."/>
            <person name="Schoenfeld J."/>
            <person name="Seshagiri S."/>
            <person name="Simmons L."/>
            <person name="Singh J."/>
            <person name="Smith V."/>
            <person name="Stinson J."/>
            <person name="Vagts A."/>
            <person name="Vandlen R.L."/>
            <person name="Watanabe C."/>
            <person name="Wieand D."/>
            <person name="Woods K."/>
            <person name="Xie M.-H."/>
            <person name="Yansura D.G."/>
            <person name="Yi S."/>
            <person name="Yu G."/>
            <person name="Yuan J."/>
            <person name="Zhang M."/>
            <person name="Zhang Z."/>
            <person name="Goddard A.D."/>
            <person name="Wood W.I."/>
            <person name="Godowski P.J."/>
            <person name="Gray A.M."/>
        </authorList>
    </citation>
    <scope>NUCLEOTIDE SEQUENCE [LARGE SCALE MRNA]</scope>
</reference>
<reference key="2">
    <citation type="journal article" date="2004" name="Genome Res.">
        <title>The status, quality, and expansion of the NIH full-length cDNA project: the Mammalian Gene Collection (MGC).</title>
        <authorList>
            <consortium name="The MGC Project Team"/>
        </authorList>
    </citation>
    <scope>NUCLEOTIDE SEQUENCE [LARGE SCALE MRNA]</scope>
    <source>
        <tissue>Brain</tissue>
    </source>
</reference>
<reference key="3">
    <citation type="journal article" date="2014" name="Am. J. Hum. Genet.">
        <title>Integrative DNA, RNA, and protein evidence connects TREML4 to coronary artery calcification.</title>
        <authorList>
            <consortium name="NISC Comparative Sequencing Program"/>
            <consortium name="CHARGE Consortium"/>
            <person name="Sen S.K."/>
            <person name="Boelte K.C."/>
            <person name="Barb J.J."/>
            <person name="Joehanes R."/>
            <person name="Zhao X."/>
            <person name="Cheng Q."/>
            <person name="Adams L."/>
            <person name="Teer J.K."/>
            <person name="Accame D.S."/>
            <person name="Chowdhury S."/>
            <person name="Singh L.N."/>
            <person name="Kavousi M."/>
            <person name="Peyser P.A."/>
            <person name="Quigley L."/>
            <person name="Priel D.L."/>
            <person name="Lau K."/>
            <person name="Kuhns D.B."/>
            <person name="Yoshimura T."/>
            <person name="Johnson A.D."/>
            <person name="Hwang S.J."/>
            <person name="Chen M.Y."/>
            <person name="Arai A.E."/>
            <person name="Green E.D."/>
            <person name="Mullikin J.C."/>
            <person name="Kolodgie F.D."/>
            <person name="O'Donnell C.J."/>
            <person name="Virmani R."/>
            <person name="Munson P.J."/>
            <person name="McVicar D.W."/>
            <person name="Biesecker L.G."/>
        </authorList>
    </citation>
    <scope>SUBCELLULAR LOCATION</scope>
</reference>
<reference key="4">
    <citation type="journal article" date="2015" name="Nat. Immunol.">
        <title>The receptor TREML4 amplifies TLR7-mediated signaling during antiviral responses and autoimmunity.</title>
        <authorList>
            <person name="Ramirez-Ortiz Z.G."/>
            <person name="Prasad A."/>
            <person name="Griffith J.W."/>
            <person name="Pendergraft W.F. III"/>
            <person name="Cowley G.S."/>
            <person name="Root D.E."/>
            <person name="Tai M."/>
            <person name="Luster A.D."/>
            <person name="El Khoury J."/>
            <person name="Hacohen N."/>
            <person name="Means T.K."/>
        </authorList>
    </citation>
    <scope>FUNCTION</scope>
</reference>
<protein>
    <recommendedName>
        <fullName>Trem-like transcript 4 protein</fullName>
        <shortName>TLT-4</shortName>
    </recommendedName>
    <alternativeName>
        <fullName>Triggering receptor expressed on myeloid cells-like protein 4</fullName>
    </alternativeName>
</protein>
<evidence type="ECO:0000255" key="1"/>
<evidence type="ECO:0000255" key="2">
    <source>
        <dbReference type="PROSITE-ProRule" id="PRU00114"/>
    </source>
</evidence>
<evidence type="ECO:0000269" key="3">
    <source>
    </source>
</evidence>
<evidence type="ECO:0000305" key="4">
    <source>
    </source>
</evidence>
<gene>
    <name type="primary">TREML4</name>
    <name type="synonym">TLT4</name>
    <name type="ORF">UNQ9425/PRO34675</name>
</gene>
<proteinExistence type="evidence at transcript level"/>
<keyword id="KW-1015">Disulfide bond</keyword>
<keyword id="KW-0325">Glycoprotein</keyword>
<keyword id="KW-0391">Immunity</keyword>
<keyword id="KW-0393">Immunoglobulin domain</keyword>
<keyword id="KW-0399">Innate immunity</keyword>
<keyword id="KW-1185">Reference proteome</keyword>
<keyword id="KW-0964">Secreted</keyword>
<keyword id="KW-0732">Signal</keyword>
<comment type="function">
    <text evidence="3">Positively regulates Toll-like receptor TLR7 signaling in macrophages.</text>
</comment>
<comment type="subcellular location">
    <subcellularLocation>
        <location evidence="4">Secreted</location>
    </subcellularLocation>
</comment>
<accession>Q6UXN2</accession>
<accession>B7ZL92</accession>
<sequence length="200" mass="21924">MAWGGVHTCCFHLCCCCSWPQGAVPEELHKHPGQTLLLQCQYSPKRGPYQPKSWCQQTSPSRCTLLVTSSKPWTAVQKSHYTIWDKPNAGFFNITMIQLTQNDSGFYWCGIYNASENIITVLRNISLVVSPAPTTSPMWTLPWLPTSTVLITSPEGTSGHPSINGSETRKSRAPACLGSGGPRFLVLVLCGLLLAKGLML</sequence>